<name>PGLRA_NEOFI</name>
<accession>A1CVV8</accession>
<evidence type="ECO:0000250" key="1"/>
<evidence type="ECO:0000255" key="2"/>
<evidence type="ECO:0000255" key="3">
    <source>
        <dbReference type="PROSITE-ProRule" id="PRU10052"/>
    </source>
</evidence>
<evidence type="ECO:0000305" key="4"/>
<keyword id="KW-0961">Cell wall biogenesis/degradation</keyword>
<keyword id="KW-1015">Disulfide bond</keyword>
<keyword id="KW-0325">Glycoprotein</keyword>
<keyword id="KW-0326">Glycosidase</keyword>
<keyword id="KW-0378">Hydrolase</keyword>
<keyword id="KW-1185">Reference proteome</keyword>
<keyword id="KW-0677">Repeat</keyword>
<keyword id="KW-0964">Secreted</keyword>
<keyword id="KW-0732">Signal</keyword>
<keyword id="KW-0865">Zymogen</keyword>
<comment type="function">
    <text evidence="1">Involved in maceration and soft-rotting of plant tissue. Hydrolyzes the 1,4-alpha glycosidic bonds of de-esterified pectate in the smooth region of the plant cell wall (By similarity).</text>
</comment>
<comment type="catalytic activity">
    <reaction>
        <text>(1,4-alpha-D-galacturonosyl)n+m + H2O = (1,4-alpha-D-galacturonosyl)n + (1,4-alpha-D-galacturonosyl)m.</text>
        <dbReference type="EC" id="3.2.1.15"/>
    </reaction>
</comment>
<comment type="subcellular location">
    <subcellularLocation>
        <location evidence="1">Secreted</location>
    </subcellularLocation>
</comment>
<comment type="similarity">
    <text evidence="4">Belongs to the glycosyl hydrolase 28 family.</text>
</comment>
<reference key="1">
    <citation type="journal article" date="2008" name="PLoS Genet.">
        <title>Genomic islands in the pathogenic filamentous fungus Aspergillus fumigatus.</title>
        <authorList>
            <person name="Fedorova N.D."/>
            <person name="Khaldi N."/>
            <person name="Joardar V.S."/>
            <person name="Maiti R."/>
            <person name="Amedeo P."/>
            <person name="Anderson M.J."/>
            <person name="Crabtree J."/>
            <person name="Silva J.C."/>
            <person name="Badger J.H."/>
            <person name="Albarraq A."/>
            <person name="Angiuoli S."/>
            <person name="Bussey H."/>
            <person name="Bowyer P."/>
            <person name="Cotty P.J."/>
            <person name="Dyer P.S."/>
            <person name="Egan A."/>
            <person name="Galens K."/>
            <person name="Fraser-Liggett C.M."/>
            <person name="Haas B.J."/>
            <person name="Inman J.M."/>
            <person name="Kent R."/>
            <person name="Lemieux S."/>
            <person name="Malavazi I."/>
            <person name="Orvis J."/>
            <person name="Roemer T."/>
            <person name="Ronning C.M."/>
            <person name="Sundaram J.P."/>
            <person name="Sutton G."/>
            <person name="Turner G."/>
            <person name="Venter J.C."/>
            <person name="White O.R."/>
            <person name="Whitty B.R."/>
            <person name="Youngman P."/>
            <person name="Wolfe K.H."/>
            <person name="Goldman G.H."/>
            <person name="Wortman J.R."/>
            <person name="Jiang B."/>
            <person name="Denning D.W."/>
            <person name="Nierman W.C."/>
        </authorList>
    </citation>
    <scope>NUCLEOTIDE SEQUENCE [LARGE SCALE GENOMIC DNA]</scope>
    <source>
        <strain>ATCC 1020 / DSM 3700 / CBS 544.65 / FGSC A1164 / JCM 1740 / NRRL 181 / WB 181</strain>
    </source>
</reference>
<feature type="signal peptide" evidence="2">
    <location>
        <begin position="1"/>
        <end position="18"/>
    </location>
</feature>
<feature type="propeptide" id="PRO_0000393642" evidence="2">
    <location>
        <begin position="19"/>
        <end position="31"/>
    </location>
</feature>
<feature type="chain" id="PRO_0000393643" description="Probable endopolygalacturonase A">
    <location>
        <begin position="32"/>
        <end position="368"/>
    </location>
</feature>
<feature type="repeat" description="PbH1 1">
    <location>
        <begin position="140"/>
        <end position="162"/>
    </location>
</feature>
<feature type="repeat" description="PbH1 2">
    <location>
        <begin position="167"/>
        <end position="192"/>
    </location>
</feature>
<feature type="repeat" description="PbH1 3">
    <location>
        <begin position="193"/>
        <end position="214"/>
    </location>
</feature>
<feature type="repeat" description="PbH1 4">
    <location>
        <begin position="215"/>
        <end position="235"/>
    </location>
</feature>
<feature type="repeat" description="PbH1 5">
    <location>
        <begin position="244"/>
        <end position="265"/>
    </location>
</feature>
<feature type="repeat" description="PbH1 6">
    <location>
        <begin position="273"/>
        <end position="295"/>
    </location>
</feature>
<feature type="repeat" description="PbH1 7">
    <location>
        <begin position="307"/>
        <end position="352"/>
    </location>
</feature>
<feature type="active site" description="Proton donor" evidence="3">
    <location>
        <position position="207"/>
    </location>
</feature>
<feature type="active site" evidence="3">
    <location>
        <position position="229"/>
    </location>
</feature>
<feature type="glycosylation site" description="N-linked (GlcNAc...) asparagine" evidence="2">
    <location>
        <position position="246"/>
    </location>
</feature>
<feature type="disulfide bond" evidence="1">
    <location>
        <begin position="35"/>
        <end position="50"/>
    </location>
</feature>
<feature type="disulfide bond" evidence="1">
    <location>
        <begin position="209"/>
        <end position="225"/>
    </location>
</feature>
<feature type="disulfide bond" evidence="1">
    <location>
        <begin position="335"/>
        <end position="340"/>
    </location>
</feature>
<feature type="disulfide bond" evidence="1">
    <location>
        <begin position="359"/>
        <end position="368"/>
    </location>
</feature>
<protein>
    <recommendedName>
        <fullName>Probable endopolygalacturonase A</fullName>
        <ecNumber>3.2.1.15</ecNumber>
    </recommendedName>
    <alternativeName>
        <fullName>Pectinase A</fullName>
    </alternativeName>
    <alternativeName>
        <fullName>Polygalacturonase A</fullName>
    </alternativeName>
</protein>
<proteinExistence type="inferred from homology"/>
<organism>
    <name type="scientific">Neosartorya fischeri (strain ATCC 1020 / DSM 3700 / CBS 544.65 / FGSC A1164 / JCM 1740 / NRRL 181 / WB 181)</name>
    <name type="common">Aspergillus fischerianus</name>
    <dbReference type="NCBI Taxonomy" id="331117"/>
    <lineage>
        <taxon>Eukaryota</taxon>
        <taxon>Fungi</taxon>
        <taxon>Dikarya</taxon>
        <taxon>Ascomycota</taxon>
        <taxon>Pezizomycotina</taxon>
        <taxon>Eurotiomycetes</taxon>
        <taxon>Eurotiomycetidae</taxon>
        <taxon>Eurotiales</taxon>
        <taxon>Aspergillaceae</taxon>
        <taxon>Aspergillus</taxon>
        <taxon>Aspergillus subgen. Fumigati</taxon>
    </lineage>
</organism>
<gene>
    <name type="primary">pgaA</name>
    <name type="synonym">pecA</name>
    <name type="ORF">NFIA_102450</name>
</gene>
<sequence length="368" mass="38109">MRSVELLSLAALGSLVAAAPAPSRVSDLTKRSSTCTFTAASQATESASGCSEIVLDNIEVPAGETLDLSDVDDGTTIVFEGTTTFGYKEWSGPLIRFGGKDITVKQNSGAVIDGEGSRWWDGEGTNGGKTKPKFMYAHSLEDSTITGLSIKNTPVQAISVQATNLYLIDITIDNSDGDDNGGHNTDGFDISESTGVYIRGATVKNQDDCIAINSGENIEFSGGTCSGGHGLSIGSVGGRDDNTVKNVTITDSTVTDSANGVRIKTVYDATGSVSEVTYSNIKLSGITDYGIVIEQDYENGSPTGTPTTGVPITDLTIDGVTGTVESDAVEVYILCGDGSCSDWTWEGVDITGGETSSKCENVPSGASC</sequence>
<dbReference type="EC" id="3.2.1.15"/>
<dbReference type="EMBL" id="DS027685">
    <property type="protein sequence ID" value="EAW24760.1"/>
    <property type="molecule type" value="Genomic_DNA"/>
</dbReference>
<dbReference type="RefSeq" id="XP_001266657.1">
    <property type="nucleotide sequence ID" value="XM_001266656.1"/>
</dbReference>
<dbReference type="SMR" id="A1CVV8"/>
<dbReference type="STRING" id="331117.A1CVV8"/>
<dbReference type="GlyCosmos" id="A1CVV8">
    <property type="glycosylation" value="1 site, No reported glycans"/>
</dbReference>
<dbReference type="EnsemblFungi" id="EAW24760">
    <property type="protein sequence ID" value="EAW24760"/>
    <property type="gene ID" value="NFIA_102450"/>
</dbReference>
<dbReference type="GeneID" id="4594124"/>
<dbReference type="KEGG" id="nfi:NFIA_102450"/>
<dbReference type="VEuPathDB" id="FungiDB:NFIA_102450"/>
<dbReference type="eggNOG" id="ENOG502QST2">
    <property type="taxonomic scope" value="Eukaryota"/>
</dbReference>
<dbReference type="HOGENOM" id="CLU_040116_0_0_1"/>
<dbReference type="OMA" id="WVNNLVV"/>
<dbReference type="OrthoDB" id="1546079at2759"/>
<dbReference type="Proteomes" id="UP000006702">
    <property type="component" value="Unassembled WGS sequence"/>
</dbReference>
<dbReference type="GO" id="GO:0005576">
    <property type="term" value="C:extracellular region"/>
    <property type="evidence" value="ECO:0000250"/>
    <property type="project" value="UniProtKB"/>
</dbReference>
<dbReference type="GO" id="GO:0004650">
    <property type="term" value="F:polygalacturonase activity"/>
    <property type="evidence" value="ECO:0000250"/>
    <property type="project" value="UniProtKB"/>
</dbReference>
<dbReference type="GO" id="GO:0071555">
    <property type="term" value="P:cell wall organization"/>
    <property type="evidence" value="ECO:0007669"/>
    <property type="project" value="UniProtKB-KW"/>
</dbReference>
<dbReference type="GO" id="GO:0045490">
    <property type="term" value="P:pectin catabolic process"/>
    <property type="evidence" value="ECO:0000250"/>
    <property type="project" value="UniProtKB"/>
</dbReference>
<dbReference type="FunFam" id="2.160.20.10:FF:000002">
    <property type="entry name" value="Endopolygalacturonase D"/>
    <property type="match status" value="1"/>
</dbReference>
<dbReference type="Gene3D" id="2.160.20.10">
    <property type="entry name" value="Single-stranded right-handed beta-helix, Pectin lyase-like"/>
    <property type="match status" value="1"/>
</dbReference>
<dbReference type="InterPro" id="IPR000743">
    <property type="entry name" value="Glyco_hydro_28"/>
</dbReference>
<dbReference type="InterPro" id="IPR050434">
    <property type="entry name" value="Glycosyl_hydrlase_28"/>
</dbReference>
<dbReference type="InterPro" id="IPR006626">
    <property type="entry name" value="PbH1"/>
</dbReference>
<dbReference type="InterPro" id="IPR012334">
    <property type="entry name" value="Pectin_lyas_fold"/>
</dbReference>
<dbReference type="InterPro" id="IPR011050">
    <property type="entry name" value="Pectin_lyase_fold/virulence"/>
</dbReference>
<dbReference type="PANTHER" id="PTHR31884:SF13">
    <property type="entry name" value="ENDOPOLYGALACTURONASE B"/>
    <property type="match status" value="1"/>
</dbReference>
<dbReference type="PANTHER" id="PTHR31884">
    <property type="entry name" value="POLYGALACTURONASE"/>
    <property type="match status" value="1"/>
</dbReference>
<dbReference type="Pfam" id="PF00295">
    <property type="entry name" value="Glyco_hydro_28"/>
    <property type="match status" value="1"/>
</dbReference>
<dbReference type="SMART" id="SM00710">
    <property type="entry name" value="PbH1"/>
    <property type="match status" value="7"/>
</dbReference>
<dbReference type="SUPFAM" id="SSF51126">
    <property type="entry name" value="Pectin lyase-like"/>
    <property type="match status" value="1"/>
</dbReference>
<dbReference type="PROSITE" id="PS00502">
    <property type="entry name" value="POLYGALACTURONASE"/>
    <property type="match status" value="1"/>
</dbReference>